<feature type="chain" id="PRO_0000160442" description="ATP-dependent Clp protease ATP-binding subunit ClpX">
    <location>
        <begin position="1"/>
        <end position="449"/>
    </location>
</feature>
<feature type="domain" description="ClpX-type ZB" evidence="2">
    <location>
        <begin position="1"/>
        <end position="51"/>
    </location>
</feature>
<feature type="region of interest" description="Disordered" evidence="3">
    <location>
        <begin position="50"/>
        <end position="80"/>
    </location>
</feature>
<feature type="compositionally biased region" description="Low complexity" evidence="3">
    <location>
        <begin position="57"/>
        <end position="76"/>
    </location>
</feature>
<feature type="binding site" evidence="2">
    <location>
        <position position="10"/>
    </location>
    <ligand>
        <name>Zn(2+)</name>
        <dbReference type="ChEBI" id="CHEBI:29105"/>
    </ligand>
</feature>
<feature type="binding site" evidence="2">
    <location>
        <position position="13"/>
    </location>
    <ligand>
        <name>Zn(2+)</name>
        <dbReference type="ChEBI" id="CHEBI:29105"/>
    </ligand>
</feature>
<feature type="binding site" evidence="2">
    <location>
        <position position="32"/>
    </location>
    <ligand>
        <name>Zn(2+)</name>
        <dbReference type="ChEBI" id="CHEBI:29105"/>
    </ligand>
</feature>
<feature type="binding site" evidence="2">
    <location>
        <position position="35"/>
    </location>
    <ligand>
        <name>Zn(2+)</name>
        <dbReference type="ChEBI" id="CHEBI:29105"/>
    </ligand>
</feature>
<feature type="binding site" evidence="1">
    <location>
        <begin position="143"/>
        <end position="150"/>
    </location>
    <ligand>
        <name>ATP</name>
        <dbReference type="ChEBI" id="CHEBI:30616"/>
    </ligand>
</feature>
<comment type="function">
    <text evidence="1">ATP-dependent specificity component of the Clp protease. It directs the protease to specific substrates. Can perform chaperone functions in the absence of ClpP.</text>
</comment>
<comment type="subunit">
    <text evidence="1">Component of the ClpX-ClpP complex. Forms a hexameric ring that, in the presence of ATP, binds to fourteen ClpP subunits assembled into a disk-like structure with a central cavity, resembling the structure of eukaryotic proteasomes.</text>
</comment>
<comment type="similarity">
    <text evidence="1">Belongs to the ClpX chaperone family.</text>
</comment>
<keyword id="KW-0067">ATP-binding</keyword>
<keyword id="KW-0143">Chaperone</keyword>
<keyword id="KW-0479">Metal-binding</keyword>
<keyword id="KW-0547">Nucleotide-binding</keyword>
<keyword id="KW-0862">Zinc</keyword>
<accession>Q7UA37</accession>
<sequence>MAKFDAHLKCSFCGKSQDQVRKLIAGPGVYICDECIDLCNEILDEELVDSQGNRGQAADSSRKAAPAAKKSGKPAPTLASIPKPQQIKSFLDEQVVGQEAAKKVMSVAVYNHYKRLAWQGDGQGETEQTATRLHKSNILLIGPTGCGKTLLAQTLAEMLDVPFAVADATTLTEAGYVGEDVENILLRLLQKADMDVDQAQRGIIYIDEIDKIARKSENPSITRDVSGEGVQQALLKMLEGTVANVPPQGGRKHPYQDCIQIDTSQILFICGGAFVGLDEVVQKRMGRNAIGFMPTDGRGRSRANRELQTTQVLRHLEPDDLVKYGLIPEFIGRMPVSAVLEPLDESALESILTEPRDALVKQFRTLLSMDNVQLQFEPAAIHAIAQEAHRRKTGARALRGIVEELMLDLMYDLPSQSTVKEFTITQAMVEQHTGGKVLPLPGTEQQKTA</sequence>
<organism>
    <name type="scientific">Parasynechococcus marenigrum (strain WH8102)</name>
    <dbReference type="NCBI Taxonomy" id="84588"/>
    <lineage>
        <taxon>Bacteria</taxon>
        <taxon>Bacillati</taxon>
        <taxon>Cyanobacteriota</taxon>
        <taxon>Cyanophyceae</taxon>
        <taxon>Synechococcales</taxon>
        <taxon>Prochlorococcaceae</taxon>
        <taxon>Parasynechococcus</taxon>
        <taxon>Parasynechococcus marenigrum</taxon>
    </lineage>
</organism>
<name>CLPX_PARMW</name>
<evidence type="ECO:0000255" key="1">
    <source>
        <dbReference type="HAMAP-Rule" id="MF_00175"/>
    </source>
</evidence>
<evidence type="ECO:0000255" key="2">
    <source>
        <dbReference type="PROSITE-ProRule" id="PRU01250"/>
    </source>
</evidence>
<evidence type="ECO:0000256" key="3">
    <source>
        <dbReference type="SAM" id="MobiDB-lite"/>
    </source>
</evidence>
<dbReference type="EMBL" id="BX569689">
    <property type="protein sequence ID" value="CAE06578.1"/>
    <property type="molecule type" value="Genomic_DNA"/>
</dbReference>
<dbReference type="RefSeq" id="WP_011126941.1">
    <property type="nucleotide sequence ID" value="NC_005070.1"/>
</dbReference>
<dbReference type="SMR" id="Q7UA37"/>
<dbReference type="STRING" id="84588.SYNW0063"/>
<dbReference type="KEGG" id="syw:SYNW0063"/>
<dbReference type="eggNOG" id="COG1219">
    <property type="taxonomic scope" value="Bacteria"/>
</dbReference>
<dbReference type="HOGENOM" id="CLU_014218_8_2_3"/>
<dbReference type="Proteomes" id="UP000001422">
    <property type="component" value="Chromosome"/>
</dbReference>
<dbReference type="GO" id="GO:0009376">
    <property type="term" value="C:HslUV protease complex"/>
    <property type="evidence" value="ECO:0007669"/>
    <property type="project" value="TreeGrafter"/>
</dbReference>
<dbReference type="GO" id="GO:0005524">
    <property type="term" value="F:ATP binding"/>
    <property type="evidence" value="ECO:0007669"/>
    <property type="project" value="UniProtKB-UniRule"/>
</dbReference>
<dbReference type="GO" id="GO:0016887">
    <property type="term" value="F:ATP hydrolysis activity"/>
    <property type="evidence" value="ECO:0007669"/>
    <property type="project" value="InterPro"/>
</dbReference>
<dbReference type="GO" id="GO:0140662">
    <property type="term" value="F:ATP-dependent protein folding chaperone"/>
    <property type="evidence" value="ECO:0007669"/>
    <property type="project" value="InterPro"/>
</dbReference>
<dbReference type="GO" id="GO:0046983">
    <property type="term" value="F:protein dimerization activity"/>
    <property type="evidence" value="ECO:0007669"/>
    <property type="project" value="InterPro"/>
</dbReference>
<dbReference type="GO" id="GO:0051082">
    <property type="term" value="F:unfolded protein binding"/>
    <property type="evidence" value="ECO:0007669"/>
    <property type="project" value="UniProtKB-UniRule"/>
</dbReference>
<dbReference type="GO" id="GO:0008270">
    <property type="term" value="F:zinc ion binding"/>
    <property type="evidence" value="ECO:0007669"/>
    <property type="project" value="InterPro"/>
</dbReference>
<dbReference type="GO" id="GO:0051301">
    <property type="term" value="P:cell division"/>
    <property type="evidence" value="ECO:0007669"/>
    <property type="project" value="TreeGrafter"/>
</dbReference>
<dbReference type="GO" id="GO:0051603">
    <property type="term" value="P:proteolysis involved in protein catabolic process"/>
    <property type="evidence" value="ECO:0007669"/>
    <property type="project" value="TreeGrafter"/>
</dbReference>
<dbReference type="CDD" id="cd19497">
    <property type="entry name" value="RecA-like_ClpX"/>
    <property type="match status" value="1"/>
</dbReference>
<dbReference type="FunFam" id="1.10.8.60:FF:000002">
    <property type="entry name" value="ATP-dependent Clp protease ATP-binding subunit ClpX"/>
    <property type="match status" value="1"/>
</dbReference>
<dbReference type="FunFam" id="3.40.50.300:FF:000005">
    <property type="entry name" value="ATP-dependent Clp protease ATP-binding subunit ClpX"/>
    <property type="match status" value="1"/>
</dbReference>
<dbReference type="Gene3D" id="1.10.8.60">
    <property type="match status" value="1"/>
</dbReference>
<dbReference type="Gene3D" id="6.20.220.10">
    <property type="entry name" value="ClpX chaperone, C4-type zinc finger domain"/>
    <property type="match status" value="1"/>
</dbReference>
<dbReference type="Gene3D" id="3.40.50.300">
    <property type="entry name" value="P-loop containing nucleotide triphosphate hydrolases"/>
    <property type="match status" value="1"/>
</dbReference>
<dbReference type="HAMAP" id="MF_00175">
    <property type="entry name" value="ClpX"/>
    <property type="match status" value="1"/>
</dbReference>
<dbReference type="InterPro" id="IPR003593">
    <property type="entry name" value="AAA+_ATPase"/>
</dbReference>
<dbReference type="InterPro" id="IPR050052">
    <property type="entry name" value="ATP-dep_Clp_protease_ClpX"/>
</dbReference>
<dbReference type="InterPro" id="IPR003959">
    <property type="entry name" value="ATPase_AAA_core"/>
</dbReference>
<dbReference type="InterPro" id="IPR019489">
    <property type="entry name" value="Clp_ATPase_C"/>
</dbReference>
<dbReference type="InterPro" id="IPR004487">
    <property type="entry name" value="Clp_protease_ATP-bd_su_ClpX"/>
</dbReference>
<dbReference type="InterPro" id="IPR046425">
    <property type="entry name" value="ClpX_bact"/>
</dbReference>
<dbReference type="InterPro" id="IPR027417">
    <property type="entry name" value="P-loop_NTPase"/>
</dbReference>
<dbReference type="InterPro" id="IPR010603">
    <property type="entry name" value="Znf_CppX_C4"/>
</dbReference>
<dbReference type="InterPro" id="IPR038366">
    <property type="entry name" value="Znf_CppX_C4_sf"/>
</dbReference>
<dbReference type="NCBIfam" id="TIGR00382">
    <property type="entry name" value="clpX"/>
    <property type="match status" value="1"/>
</dbReference>
<dbReference type="NCBIfam" id="NF003745">
    <property type="entry name" value="PRK05342.1"/>
    <property type="match status" value="1"/>
</dbReference>
<dbReference type="PANTHER" id="PTHR48102:SF7">
    <property type="entry name" value="ATP-DEPENDENT CLP PROTEASE ATP-BINDING SUBUNIT CLPX-LIKE, MITOCHONDRIAL"/>
    <property type="match status" value="1"/>
</dbReference>
<dbReference type="PANTHER" id="PTHR48102">
    <property type="entry name" value="ATP-DEPENDENT CLP PROTEASE ATP-BINDING SUBUNIT CLPX-LIKE, MITOCHONDRIAL-RELATED"/>
    <property type="match status" value="1"/>
</dbReference>
<dbReference type="Pfam" id="PF07724">
    <property type="entry name" value="AAA_2"/>
    <property type="match status" value="1"/>
</dbReference>
<dbReference type="Pfam" id="PF10431">
    <property type="entry name" value="ClpB_D2-small"/>
    <property type="match status" value="1"/>
</dbReference>
<dbReference type="Pfam" id="PF06689">
    <property type="entry name" value="zf-C4_ClpX"/>
    <property type="match status" value="1"/>
</dbReference>
<dbReference type="SMART" id="SM00382">
    <property type="entry name" value="AAA"/>
    <property type="match status" value="1"/>
</dbReference>
<dbReference type="SMART" id="SM01086">
    <property type="entry name" value="ClpB_D2-small"/>
    <property type="match status" value="1"/>
</dbReference>
<dbReference type="SMART" id="SM00994">
    <property type="entry name" value="zf-C4_ClpX"/>
    <property type="match status" value="1"/>
</dbReference>
<dbReference type="SUPFAM" id="SSF57716">
    <property type="entry name" value="Glucocorticoid receptor-like (DNA-binding domain)"/>
    <property type="match status" value="1"/>
</dbReference>
<dbReference type="SUPFAM" id="SSF52540">
    <property type="entry name" value="P-loop containing nucleoside triphosphate hydrolases"/>
    <property type="match status" value="1"/>
</dbReference>
<dbReference type="PROSITE" id="PS51902">
    <property type="entry name" value="CLPX_ZB"/>
    <property type="match status" value="1"/>
</dbReference>
<protein>
    <recommendedName>
        <fullName evidence="1">ATP-dependent Clp protease ATP-binding subunit ClpX</fullName>
    </recommendedName>
</protein>
<reference key="1">
    <citation type="journal article" date="2003" name="Nature">
        <title>The genome of a motile marine Synechococcus.</title>
        <authorList>
            <person name="Palenik B."/>
            <person name="Brahamsha B."/>
            <person name="Larimer F.W."/>
            <person name="Land M.L."/>
            <person name="Hauser L."/>
            <person name="Chain P."/>
            <person name="Lamerdin J.E."/>
            <person name="Regala W."/>
            <person name="Allen E.E."/>
            <person name="McCarren J."/>
            <person name="Paulsen I.T."/>
            <person name="Dufresne A."/>
            <person name="Partensky F."/>
            <person name="Webb E.A."/>
            <person name="Waterbury J."/>
        </authorList>
    </citation>
    <scope>NUCLEOTIDE SEQUENCE [LARGE SCALE GENOMIC DNA]</scope>
    <source>
        <strain>WH8102</strain>
    </source>
</reference>
<gene>
    <name evidence="1" type="primary">clpX</name>
    <name type="ordered locus">SYNW0063</name>
</gene>
<proteinExistence type="inferred from homology"/>